<evidence type="ECO:0000255" key="1"/>
<evidence type="ECO:0000255" key="2">
    <source>
        <dbReference type="PROSITE-ProRule" id="PRU00703"/>
    </source>
</evidence>
<evidence type="ECO:0000255" key="3">
    <source>
        <dbReference type="PROSITE-ProRule" id="PRU01193"/>
    </source>
</evidence>
<evidence type="ECO:0000305" key="4"/>
<evidence type="ECO:0007829" key="5">
    <source>
        <dbReference type="PDB" id="3LAE"/>
    </source>
</evidence>
<accession>Q57017</accession>
<accession>P96330</accession>
<sequence>MDSIPLSTLFIILIICLVLSAYFSGSETGLLSLNKYRLRFLSEQGNKGAKKAEKLLEKPDTLLSFILIFNNLVNISASAIATVIGMRLYGDAGVAIATGLLTFVMLVFSEIFPKTVAAMHAEKVSFFSSHILTSLLKIFYPLVWLMNIFTKSLMQIVGLKLDMQKQVISSEELRSIVSEAGEATPNEQHPQMLLSILDMETVTVDDIMVPRNEIGGINIDDDWRAIMRQLNHAAHNRVVLYKGSLDEQVLGILRVREAFRLLLEKNEFTKETLIRAADEVYFIPESTPLKTQLANFRTNKERIGLVVDEYGDIKGLVTLEDILEEIVGDFTTSTAPSIDKEVIQQSDGSMIIDGSANLRDLNKMFNWELDTEDARTFNGLILEHLEEIPDEGTICEIDGLLITILEVGDNMIKQAKVVKL</sequence>
<dbReference type="EMBL" id="L42023">
    <property type="protein sequence ID" value="AAC21785.1"/>
    <property type="status" value="ALT_INIT"/>
    <property type="molecule type" value="Genomic_DNA"/>
</dbReference>
<dbReference type="PIR" id="H64142">
    <property type="entry name" value="H64142"/>
</dbReference>
<dbReference type="RefSeq" id="NP_438281.1">
    <property type="nucleotide sequence ID" value="NC_000907.1"/>
</dbReference>
<dbReference type="PDB" id="3LAE">
    <property type="method" value="X-ray"/>
    <property type="resolution" value="1.45 A"/>
    <property type="chains" value="A=343-420"/>
</dbReference>
<dbReference type="PDBsum" id="3LAE"/>
<dbReference type="SMR" id="Q57017"/>
<dbReference type="STRING" id="71421.HI_0107"/>
<dbReference type="EnsemblBacteria" id="AAC21785">
    <property type="protein sequence ID" value="AAC21785"/>
    <property type="gene ID" value="HI_0107"/>
</dbReference>
<dbReference type="KEGG" id="hin:HI_0107"/>
<dbReference type="PATRIC" id="fig|71421.8.peg.111"/>
<dbReference type="eggNOG" id="COG4536">
    <property type="taxonomic scope" value="Bacteria"/>
</dbReference>
<dbReference type="HOGENOM" id="CLU_015237_4_1_6"/>
<dbReference type="OrthoDB" id="9797674at2"/>
<dbReference type="PhylomeDB" id="Q57017"/>
<dbReference type="EvolutionaryTrace" id="Q57017"/>
<dbReference type="Proteomes" id="UP000000579">
    <property type="component" value="Chromosome"/>
</dbReference>
<dbReference type="GO" id="GO:0005886">
    <property type="term" value="C:plasma membrane"/>
    <property type="evidence" value="ECO:0000318"/>
    <property type="project" value="GO_Central"/>
</dbReference>
<dbReference type="GO" id="GO:0050660">
    <property type="term" value="F:flavin adenine dinucleotide binding"/>
    <property type="evidence" value="ECO:0007669"/>
    <property type="project" value="InterPro"/>
</dbReference>
<dbReference type="CDD" id="cd04590">
    <property type="entry name" value="CBS_pair_CorC_HlyC_assoc"/>
    <property type="match status" value="1"/>
</dbReference>
<dbReference type="FunFam" id="3.10.580.10:FF:000012">
    <property type="entry name" value="DUF21 domain-containing protein"/>
    <property type="match status" value="1"/>
</dbReference>
<dbReference type="FunFam" id="3.30.465.10:FF:000010">
    <property type="entry name" value="DUF21 domain-containing protein"/>
    <property type="match status" value="1"/>
</dbReference>
<dbReference type="Gene3D" id="3.30.465.10">
    <property type="match status" value="1"/>
</dbReference>
<dbReference type="Gene3D" id="3.10.580.10">
    <property type="entry name" value="CBS-domain"/>
    <property type="match status" value="1"/>
</dbReference>
<dbReference type="InterPro" id="IPR000644">
    <property type="entry name" value="CBS_dom"/>
</dbReference>
<dbReference type="InterPro" id="IPR046342">
    <property type="entry name" value="CBS_dom_sf"/>
</dbReference>
<dbReference type="InterPro" id="IPR002550">
    <property type="entry name" value="CNNM"/>
</dbReference>
<dbReference type="InterPro" id="IPR036318">
    <property type="entry name" value="FAD-bd_PCMH-like_sf"/>
</dbReference>
<dbReference type="InterPro" id="IPR016169">
    <property type="entry name" value="FAD-bd_PCMH_sub2"/>
</dbReference>
<dbReference type="InterPro" id="IPR044751">
    <property type="entry name" value="Ion_transp-like_CBS"/>
</dbReference>
<dbReference type="InterPro" id="IPR005170">
    <property type="entry name" value="Transptr-assoc_dom"/>
</dbReference>
<dbReference type="NCBIfam" id="NF008604">
    <property type="entry name" value="PRK11573.1"/>
    <property type="match status" value="1"/>
</dbReference>
<dbReference type="PANTHER" id="PTHR22777">
    <property type="entry name" value="HEMOLYSIN-RELATED"/>
    <property type="match status" value="1"/>
</dbReference>
<dbReference type="PANTHER" id="PTHR22777:SF32">
    <property type="entry name" value="UPF0053 INNER MEMBRANE PROTEIN YFJD"/>
    <property type="match status" value="1"/>
</dbReference>
<dbReference type="Pfam" id="PF00571">
    <property type="entry name" value="CBS"/>
    <property type="match status" value="1"/>
</dbReference>
<dbReference type="Pfam" id="PF01595">
    <property type="entry name" value="CNNM"/>
    <property type="match status" value="1"/>
</dbReference>
<dbReference type="Pfam" id="PF03471">
    <property type="entry name" value="CorC_HlyC"/>
    <property type="match status" value="1"/>
</dbReference>
<dbReference type="SMART" id="SM01091">
    <property type="entry name" value="CorC_HlyC"/>
    <property type="match status" value="1"/>
</dbReference>
<dbReference type="SUPFAM" id="SSF54631">
    <property type="entry name" value="CBS-domain pair"/>
    <property type="match status" value="1"/>
</dbReference>
<dbReference type="SUPFAM" id="SSF56176">
    <property type="entry name" value="FAD-binding/transporter-associated domain-like"/>
    <property type="match status" value="1"/>
</dbReference>
<dbReference type="PROSITE" id="PS51371">
    <property type="entry name" value="CBS"/>
    <property type="match status" value="2"/>
</dbReference>
<dbReference type="PROSITE" id="PS51846">
    <property type="entry name" value="CNNM"/>
    <property type="match status" value="1"/>
</dbReference>
<organism>
    <name type="scientific">Haemophilus influenzae (strain ATCC 51907 / DSM 11121 / KW20 / Rd)</name>
    <dbReference type="NCBI Taxonomy" id="71421"/>
    <lineage>
        <taxon>Bacteria</taxon>
        <taxon>Pseudomonadati</taxon>
        <taxon>Pseudomonadota</taxon>
        <taxon>Gammaproteobacteria</taxon>
        <taxon>Pasteurellales</taxon>
        <taxon>Pasteurellaceae</taxon>
        <taxon>Haemophilus</taxon>
    </lineage>
</organism>
<comment type="subcellular location">
    <subcellularLocation>
        <location evidence="4">Cell membrane</location>
        <topology evidence="4">Multi-pass membrane protein</topology>
    </subcellularLocation>
</comment>
<comment type="similarity">
    <text evidence="4">Belongs to the UPF0053 family.</text>
</comment>
<comment type="sequence caution" evidence="4">
    <conflict type="erroneous initiation">
        <sequence resource="EMBL-CDS" id="AAC21785"/>
    </conflict>
</comment>
<feature type="chain" id="PRO_0000088358" description="UPF0053 protein HI_0107">
    <location>
        <begin position="1"/>
        <end position="420"/>
    </location>
</feature>
<feature type="transmembrane region" description="Helical" evidence="1">
    <location>
        <begin position="3"/>
        <end position="23"/>
    </location>
</feature>
<feature type="transmembrane region" description="Helical" evidence="1">
    <location>
        <begin position="65"/>
        <end position="85"/>
    </location>
</feature>
<feature type="transmembrane region" description="Helical" evidence="1">
    <location>
        <begin position="92"/>
        <end position="112"/>
    </location>
</feature>
<feature type="transmembrane region" description="Helical" evidence="1">
    <location>
        <begin position="126"/>
        <end position="146"/>
    </location>
</feature>
<feature type="domain" description="CNNM transmembrane" evidence="3">
    <location>
        <begin position="2"/>
        <end position="190"/>
    </location>
</feature>
<feature type="domain" description="CBS 1" evidence="2">
    <location>
        <begin position="208"/>
        <end position="268"/>
    </location>
</feature>
<feature type="domain" description="CBS 2" evidence="2">
    <location>
        <begin position="273"/>
        <end position="333"/>
    </location>
</feature>
<feature type="strand" evidence="5">
    <location>
        <begin position="350"/>
        <end position="353"/>
    </location>
</feature>
<feature type="helix" evidence="5">
    <location>
        <begin position="358"/>
        <end position="365"/>
    </location>
</feature>
<feature type="helix" evidence="5">
    <location>
        <begin position="377"/>
        <end position="384"/>
    </location>
</feature>
<feature type="strand" evidence="5">
    <location>
        <begin position="394"/>
        <end position="397"/>
    </location>
</feature>
<feature type="strand" evidence="5">
    <location>
        <begin position="400"/>
        <end position="408"/>
    </location>
</feature>
<feature type="strand" evidence="5">
    <location>
        <begin position="411"/>
        <end position="419"/>
    </location>
</feature>
<reference key="1">
    <citation type="journal article" date="1995" name="Science">
        <title>Whole-genome random sequencing and assembly of Haemophilus influenzae Rd.</title>
        <authorList>
            <person name="Fleischmann R.D."/>
            <person name="Adams M.D."/>
            <person name="White O."/>
            <person name="Clayton R.A."/>
            <person name="Kirkness E.F."/>
            <person name="Kerlavage A.R."/>
            <person name="Bult C.J."/>
            <person name="Tomb J.-F."/>
            <person name="Dougherty B.A."/>
            <person name="Merrick J.M."/>
            <person name="McKenney K."/>
            <person name="Sutton G.G."/>
            <person name="FitzHugh W."/>
            <person name="Fields C.A."/>
            <person name="Gocayne J.D."/>
            <person name="Scott J.D."/>
            <person name="Shirley R."/>
            <person name="Liu L.-I."/>
            <person name="Glodek A."/>
            <person name="Kelley J.M."/>
            <person name="Weidman J.F."/>
            <person name="Phillips C.A."/>
            <person name="Spriggs T."/>
            <person name="Hedblom E."/>
            <person name="Cotton M.D."/>
            <person name="Utterback T.R."/>
            <person name="Hanna M.C."/>
            <person name="Nguyen D.T."/>
            <person name="Saudek D.M."/>
            <person name="Brandon R.C."/>
            <person name="Fine L.D."/>
            <person name="Fritchman J.L."/>
            <person name="Fuhrmann J.L."/>
            <person name="Geoghagen N.S.M."/>
            <person name="Gnehm C.L."/>
            <person name="McDonald L.A."/>
            <person name="Small K.V."/>
            <person name="Fraser C.M."/>
            <person name="Smith H.O."/>
            <person name="Venter J.C."/>
        </authorList>
    </citation>
    <scope>NUCLEOTIDE SEQUENCE [LARGE SCALE GENOMIC DNA]</scope>
    <source>
        <strain>ATCC 51907 / DSM 11121 / KW20 / Rd</strain>
    </source>
</reference>
<protein>
    <recommendedName>
        <fullName>UPF0053 protein HI_0107</fullName>
    </recommendedName>
</protein>
<name>Y107_HAEIN</name>
<proteinExistence type="evidence at protein level"/>
<gene>
    <name type="ordered locus">HI_0107</name>
</gene>
<keyword id="KW-0002">3D-structure</keyword>
<keyword id="KW-0129">CBS domain</keyword>
<keyword id="KW-1003">Cell membrane</keyword>
<keyword id="KW-0472">Membrane</keyword>
<keyword id="KW-1185">Reference proteome</keyword>
<keyword id="KW-0677">Repeat</keyword>
<keyword id="KW-0812">Transmembrane</keyword>
<keyword id="KW-1133">Transmembrane helix</keyword>